<dbReference type="EMBL" id="CP001400">
    <property type="protein sequence ID" value="ACP38459.1"/>
    <property type="molecule type" value="Genomic_DNA"/>
</dbReference>
<dbReference type="RefSeq" id="WP_012711690.1">
    <property type="nucleotide sequence ID" value="NC_012588.1"/>
</dbReference>
<dbReference type="SMR" id="C3MXC5"/>
<dbReference type="KEGG" id="sia:M1425_1710"/>
<dbReference type="HOGENOM" id="CLU_183474_0_0_2"/>
<dbReference type="Proteomes" id="UP000001350">
    <property type="component" value="Chromosome"/>
</dbReference>
<dbReference type="GO" id="GO:0022625">
    <property type="term" value="C:cytosolic large ribosomal subunit"/>
    <property type="evidence" value="ECO:0007669"/>
    <property type="project" value="TreeGrafter"/>
</dbReference>
<dbReference type="GO" id="GO:0003723">
    <property type="term" value="F:RNA binding"/>
    <property type="evidence" value="ECO:0007669"/>
    <property type="project" value="InterPro"/>
</dbReference>
<dbReference type="GO" id="GO:0003735">
    <property type="term" value="F:structural constituent of ribosome"/>
    <property type="evidence" value="ECO:0007669"/>
    <property type="project" value="InterPro"/>
</dbReference>
<dbReference type="GO" id="GO:0042273">
    <property type="term" value="P:ribosomal large subunit biogenesis"/>
    <property type="evidence" value="ECO:0007669"/>
    <property type="project" value="TreeGrafter"/>
</dbReference>
<dbReference type="GO" id="GO:0006412">
    <property type="term" value="P:translation"/>
    <property type="evidence" value="ECO:0007669"/>
    <property type="project" value="UniProtKB-UniRule"/>
</dbReference>
<dbReference type="CDD" id="cd23702">
    <property type="entry name" value="eL14"/>
    <property type="match status" value="1"/>
</dbReference>
<dbReference type="FunFam" id="2.30.30.30:FF:000045">
    <property type="entry name" value="50S ribosomal protein L14e"/>
    <property type="match status" value="1"/>
</dbReference>
<dbReference type="Gene3D" id="2.30.30.30">
    <property type="match status" value="1"/>
</dbReference>
<dbReference type="HAMAP" id="MF_00721">
    <property type="entry name" value="Ribosomal_eL14"/>
    <property type="match status" value="1"/>
</dbReference>
<dbReference type="InterPro" id="IPR014722">
    <property type="entry name" value="Rib_uL2_dom2"/>
</dbReference>
<dbReference type="InterPro" id="IPR039660">
    <property type="entry name" value="Ribosomal_eL14"/>
</dbReference>
<dbReference type="InterPro" id="IPR023651">
    <property type="entry name" value="Ribosomal_eL14_arc"/>
</dbReference>
<dbReference type="InterPro" id="IPR008991">
    <property type="entry name" value="Translation_prot_SH3-like_sf"/>
</dbReference>
<dbReference type="NCBIfam" id="NF003320">
    <property type="entry name" value="PRK04333.1"/>
    <property type="match status" value="1"/>
</dbReference>
<dbReference type="PANTHER" id="PTHR11127">
    <property type="entry name" value="60S RIBOSOMAL PROTEIN L14"/>
    <property type="match status" value="1"/>
</dbReference>
<dbReference type="PANTHER" id="PTHR11127:SF2">
    <property type="entry name" value="LARGE RIBOSOMAL SUBUNIT PROTEIN EL14"/>
    <property type="match status" value="1"/>
</dbReference>
<dbReference type="SUPFAM" id="SSF50104">
    <property type="entry name" value="Translation proteins SH3-like domain"/>
    <property type="match status" value="1"/>
</dbReference>
<comment type="similarity">
    <text evidence="1">Belongs to the eukaryotic ribosomal protein eL14 family.</text>
</comment>
<protein>
    <recommendedName>
        <fullName evidence="1">Large ribosomal subunit protein eL14</fullName>
    </recommendedName>
    <alternativeName>
        <fullName evidence="2">50S ribosomal protein L14e</fullName>
    </alternativeName>
</protein>
<proteinExistence type="inferred from homology"/>
<keyword id="KW-0687">Ribonucleoprotein</keyword>
<keyword id="KW-0689">Ribosomal protein</keyword>
<evidence type="ECO:0000255" key="1">
    <source>
        <dbReference type="HAMAP-Rule" id="MF_00721"/>
    </source>
</evidence>
<evidence type="ECO:0000305" key="2"/>
<gene>
    <name evidence="1" type="primary">rpl14e</name>
    <name type="ordered locus">M1425_1710</name>
</gene>
<reference key="1">
    <citation type="journal article" date="2009" name="Proc. Natl. Acad. Sci. U.S.A.">
        <title>Biogeography of the Sulfolobus islandicus pan-genome.</title>
        <authorList>
            <person name="Reno M.L."/>
            <person name="Held N.L."/>
            <person name="Fields C.J."/>
            <person name="Burke P.V."/>
            <person name="Whitaker R.J."/>
        </authorList>
    </citation>
    <scope>NUCLEOTIDE SEQUENCE [LARGE SCALE GENOMIC DNA]</scope>
    <source>
        <strain>M.14.25 / Kamchatka #1</strain>
    </source>
</reference>
<name>RL14E_SACI4</name>
<sequence>MPAIEVGRICVKVKGREAGSKCVIVDIIDDNFVLVTGPKDISGVKRRRVNILHLEPTDKKIDIQKGASDEEVRKKIEEAGLTDYMKERIKIKIPTL</sequence>
<feature type="chain" id="PRO_1000212708" description="Large ribosomal subunit protein eL14">
    <location>
        <begin position="1"/>
        <end position="96"/>
    </location>
</feature>
<organism>
    <name type="scientific">Saccharolobus islandicus (strain M.14.25 / Kamchatka #1)</name>
    <name type="common">Sulfolobus islandicus</name>
    <dbReference type="NCBI Taxonomy" id="427317"/>
    <lineage>
        <taxon>Archaea</taxon>
        <taxon>Thermoproteota</taxon>
        <taxon>Thermoprotei</taxon>
        <taxon>Sulfolobales</taxon>
        <taxon>Sulfolobaceae</taxon>
        <taxon>Saccharolobus</taxon>
    </lineage>
</organism>
<accession>C3MXC5</accession>